<protein>
    <recommendedName>
        <fullName evidence="1">Ribosome maturation factor RimP</fullName>
    </recommendedName>
</protein>
<reference key="1">
    <citation type="journal article" date="2006" name="Proc. Natl. Acad. Sci. U.S.A.">
        <title>Comparative genomics of the lactic acid bacteria.</title>
        <authorList>
            <person name="Makarova K.S."/>
            <person name="Slesarev A."/>
            <person name="Wolf Y.I."/>
            <person name="Sorokin A."/>
            <person name="Mirkin B."/>
            <person name="Koonin E.V."/>
            <person name="Pavlov A."/>
            <person name="Pavlova N."/>
            <person name="Karamychev V."/>
            <person name="Polouchine N."/>
            <person name="Shakhova V."/>
            <person name="Grigoriev I."/>
            <person name="Lou Y."/>
            <person name="Rohksar D."/>
            <person name="Lucas S."/>
            <person name="Huang K."/>
            <person name="Goodstein D.M."/>
            <person name="Hawkins T."/>
            <person name="Plengvidhya V."/>
            <person name="Welker D."/>
            <person name="Hughes J."/>
            <person name="Goh Y."/>
            <person name="Benson A."/>
            <person name="Baldwin K."/>
            <person name="Lee J.-H."/>
            <person name="Diaz-Muniz I."/>
            <person name="Dosti B."/>
            <person name="Smeianov V."/>
            <person name="Wechter W."/>
            <person name="Barabote R."/>
            <person name="Lorca G."/>
            <person name="Altermann E."/>
            <person name="Barrangou R."/>
            <person name="Ganesan B."/>
            <person name="Xie Y."/>
            <person name="Rawsthorne H."/>
            <person name="Tamir D."/>
            <person name="Parker C."/>
            <person name="Breidt F."/>
            <person name="Broadbent J.R."/>
            <person name="Hutkins R."/>
            <person name="O'Sullivan D."/>
            <person name="Steele J."/>
            <person name="Unlu G."/>
            <person name="Saier M.H. Jr."/>
            <person name="Klaenhammer T."/>
            <person name="Richardson P."/>
            <person name="Kozyavkin S."/>
            <person name="Weimer B.C."/>
            <person name="Mills D.A."/>
        </authorList>
    </citation>
    <scope>NUCLEOTIDE SEQUENCE [LARGE SCALE GENOMIC DNA]</scope>
    <source>
        <strain>ATCC BAA-365 / Lb-18</strain>
    </source>
</reference>
<name>RIMP_LACDB</name>
<gene>
    <name evidence="1" type="primary">rimP</name>
    <name type="ordered locus">LBUL_1245</name>
</gene>
<evidence type="ECO:0000255" key="1">
    <source>
        <dbReference type="HAMAP-Rule" id="MF_01077"/>
    </source>
</evidence>
<proteinExistence type="inferred from homology"/>
<accession>Q049V1</accession>
<keyword id="KW-0963">Cytoplasm</keyword>
<keyword id="KW-0690">Ribosome biogenesis</keyword>
<dbReference type="EMBL" id="CP000412">
    <property type="protein sequence ID" value="ABJ58771.1"/>
    <property type="molecule type" value="Genomic_DNA"/>
</dbReference>
<dbReference type="RefSeq" id="WP_011544003.1">
    <property type="nucleotide sequence ID" value="NC_008529.1"/>
</dbReference>
<dbReference type="SMR" id="Q049V1"/>
<dbReference type="KEGG" id="lbu:LBUL_1245"/>
<dbReference type="HOGENOM" id="CLU_070525_2_0_9"/>
<dbReference type="BioCyc" id="LDEL321956:LBUL_RS05845-MONOMER"/>
<dbReference type="GO" id="GO:0005829">
    <property type="term" value="C:cytosol"/>
    <property type="evidence" value="ECO:0007669"/>
    <property type="project" value="TreeGrafter"/>
</dbReference>
<dbReference type="GO" id="GO:0000028">
    <property type="term" value="P:ribosomal small subunit assembly"/>
    <property type="evidence" value="ECO:0007669"/>
    <property type="project" value="TreeGrafter"/>
</dbReference>
<dbReference type="GO" id="GO:0006412">
    <property type="term" value="P:translation"/>
    <property type="evidence" value="ECO:0007669"/>
    <property type="project" value="TreeGrafter"/>
</dbReference>
<dbReference type="CDD" id="cd01734">
    <property type="entry name" value="YlxS_C"/>
    <property type="match status" value="1"/>
</dbReference>
<dbReference type="Gene3D" id="2.30.30.180">
    <property type="entry name" value="Ribosome maturation factor RimP, C-terminal domain"/>
    <property type="match status" value="1"/>
</dbReference>
<dbReference type="Gene3D" id="3.30.300.70">
    <property type="entry name" value="RimP-like superfamily, N-terminal"/>
    <property type="match status" value="1"/>
</dbReference>
<dbReference type="HAMAP" id="MF_01077">
    <property type="entry name" value="RimP"/>
    <property type="match status" value="1"/>
</dbReference>
<dbReference type="InterPro" id="IPR003728">
    <property type="entry name" value="Ribosome_maturation_RimP"/>
</dbReference>
<dbReference type="InterPro" id="IPR028998">
    <property type="entry name" value="RimP_C"/>
</dbReference>
<dbReference type="InterPro" id="IPR036847">
    <property type="entry name" value="RimP_C_sf"/>
</dbReference>
<dbReference type="InterPro" id="IPR028989">
    <property type="entry name" value="RimP_N"/>
</dbReference>
<dbReference type="InterPro" id="IPR035956">
    <property type="entry name" value="RimP_N_sf"/>
</dbReference>
<dbReference type="NCBIfam" id="NF000928">
    <property type="entry name" value="PRK00092.1-2"/>
    <property type="match status" value="1"/>
</dbReference>
<dbReference type="PANTHER" id="PTHR33867">
    <property type="entry name" value="RIBOSOME MATURATION FACTOR RIMP"/>
    <property type="match status" value="1"/>
</dbReference>
<dbReference type="PANTHER" id="PTHR33867:SF1">
    <property type="entry name" value="RIBOSOME MATURATION FACTOR RIMP"/>
    <property type="match status" value="1"/>
</dbReference>
<dbReference type="Pfam" id="PF17384">
    <property type="entry name" value="DUF150_C"/>
    <property type="match status" value="1"/>
</dbReference>
<dbReference type="Pfam" id="PF02576">
    <property type="entry name" value="RimP_N"/>
    <property type="match status" value="1"/>
</dbReference>
<dbReference type="SUPFAM" id="SSF74942">
    <property type="entry name" value="YhbC-like, C-terminal domain"/>
    <property type="match status" value="1"/>
</dbReference>
<dbReference type="SUPFAM" id="SSF75420">
    <property type="entry name" value="YhbC-like, N-terminal domain"/>
    <property type="match status" value="1"/>
</dbReference>
<feature type="chain" id="PRO_1000064723" description="Ribosome maturation factor RimP">
    <location>
        <begin position="1"/>
        <end position="158"/>
    </location>
</feature>
<sequence length="158" mass="18251">MPKNLTPILEAIEPVIIGHDCELVDLEYVKEKSQDYLRIYVDKQPNGIDIETIAELSELVGEKLDSMQPDPLPDPYILELSSPGLERPIKKEQDWEKAKGQYIHVGLYQKLEGEKVFEGHLLDLDDQEIKLEIKIKTRRKQLTIPRKQIASARFAIEF</sequence>
<organism>
    <name type="scientific">Lactobacillus delbrueckii subsp. bulgaricus (strain ATCC BAA-365 / Lb-18)</name>
    <dbReference type="NCBI Taxonomy" id="321956"/>
    <lineage>
        <taxon>Bacteria</taxon>
        <taxon>Bacillati</taxon>
        <taxon>Bacillota</taxon>
        <taxon>Bacilli</taxon>
        <taxon>Lactobacillales</taxon>
        <taxon>Lactobacillaceae</taxon>
        <taxon>Lactobacillus</taxon>
    </lineage>
</organism>
<comment type="function">
    <text evidence="1">Required for maturation of 30S ribosomal subunits.</text>
</comment>
<comment type="subcellular location">
    <subcellularLocation>
        <location evidence="1">Cytoplasm</location>
    </subcellularLocation>
</comment>
<comment type="similarity">
    <text evidence="1">Belongs to the RimP family.</text>
</comment>